<feature type="chain" id="PRO_0000142405" description="Adenine deaminase">
    <location>
        <begin position="1"/>
        <end position="586"/>
    </location>
</feature>
<accession>Q6MJY0</accession>
<keyword id="KW-0378">Hydrolase</keyword>
<keyword id="KW-0464">Manganese</keyword>
<keyword id="KW-1185">Reference proteome</keyword>
<evidence type="ECO:0000255" key="1">
    <source>
        <dbReference type="HAMAP-Rule" id="MF_01518"/>
    </source>
</evidence>
<name>ADEC_BDEBA</name>
<reference key="1">
    <citation type="journal article" date="2004" name="Science">
        <title>A predator unmasked: life cycle of Bdellovibrio bacteriovorus from a genomic perspective.</title>
        <authorList>
            <person name="Rendulic S."/>
            <person name="Jagtap P."/>
            <person name="Rosinus A."/>
            <person name="Eppinger M."/>
            <person name="Baar C."/>
            <person name="Lanz C."/>
            <person name="Keller H."/>
            <person name="Lambert C."/>
            <person name="Evans K.J."/>
            <person name="Goesmann A."/>
            <person name="Meyer F."/>
            <person name="Sockett R.E."/>
            <person name="Schuster S.C."/>
        </authorList>
    </citation>
    <scope>NUCLEOTIDE SEQUENCE [LARGE SCALE GENOMIC DNA]</scope>
    <source>
        <strain>ATCC 15356 / DSM 50701 / NCIMB 9529 / HD100</strain>
    </source>
</reference>
<dbReference type="EC" id="3.5.4.2" evidence="1"/>
<dbReference type="EMBL" id="BX842653">
    <property type="protein sequence ID" value="CAE80429.1"/>
    <property type="molecule type" value="Genomic_DNA"/>
</dbReference>
<dbReference type="RefSeq" id="WP_011165032.1">
    <property type="nucleotide sequence ID" value="NC_005363.1"/>
</dbReference>
<dbReference type="SMR" id="Q6MJY0"/>
<dbReference type="STRING" id="264462.Bd2636"/>
<dbReference type="GeneID" id="93013529"/>
<dbReference type="KEGG" id="bba:Bd2636"/>
<dbReference type="eggNOG" id="COG1001">
    <property type="taxonomic scope" value="Bacteria"/>
</dbReference>
<dbReference type="HOGENOM" id="CLU_027935_0_0_7"/>
<dbReference type="Proteomes" id="UP000008080">
    <property type="component" value="Chromosome"/>
</dbReference>
<dbReference type="GO" id="GO:0000034">
    <property type="term" value="F:adenine deaminase activity"/>
    <property type="evidence" value="ECO:0007669"/>
    <property type="project" value="UniProtKB-UniRule"/>
</dbReference>
<dbReference type="GO" id="GO:0006146">
    <property type="term" value="P:adenine catabolic process"/>
    <property type="evidence" value="ECO:0007669"/>
    <property type="project" value="InterPro"/>
</dbReference>
<dbReference type="CDD" id="cd01295">
    <property type="entry name" value="AdeC"/>
    <property type="match status" value="1"/>
</dbReference>
<dbReference type="FunFam" id="3.20.20.140:FF:000016">
    <property type="entry name" value="Adenine deaminase"/>
    <property type="match status" value="1"/>
</dbReference>
<dbReference type="Gene3D" id="3.20.20.140">
    <property type="entry name" value="Metal-dependent hydrolases"/>
    <property type="match status" value="1"/>
</dbReference>
<dbReference type="Gene3D" id="2.30.40.10">
    <property type="entry name" value="Urease, subunit C, domain 1"/>
    <property type="match status" value="1"/>
</dbReference>
<dbReference type="HAMAP" id="MF_01518">
    <property type="entry name" value="Adenine_deamin"/>
    <property type="match status" value="1"/>
</dbReference>
<dbReference type="InterPro" id="IPR006679">
    <property type="entry name" value="Adenine_deam"/>
</dbReference>
<dbReference type="InterPro" id="IPR026912">
    <property type="entry name" value="Adenine_deam_C"/>
</dbReference>
<dbReference type="InterPro" id="IPR006680">
    <property type="entry name" value="Amidohydro-rel"/>
</dbReference>
<dbReference type="InterPro" id="IPR011059">
    <property type="entry name" value="Metal-dep_hydrolase_composite"/>
</dbReference>
<dbReference type="InterPro" id="IPR032466">
    <property type="entry name" value="Metal_Hydrolase"/>
</dbReference>
<dbReference type="NCBIfam" id="TIGR01178">
    <property type="entry name" value="ade"/>
    <property type="match status" value="1"/>
</dbReference>
<dbReference type="NCBIfam" id="NF007457">
    <property type="entry name" value="PRK10027.1"/>
    <property type="match status" value="1"/>
</dbReference>
<dbReference type="PANTHER" id="PTHR11113:SF2">
    <property type="entry name" value="ADENINE DEAMINASE"/>
    <property type="match status" value="1"/>
</dbReference>
<dbReference type="PANTHER" id="PTHR11113">
    <property type="entry name" value="N-ACETYLGLUCOSAMINE-6-PHOSPHATE DEACETYLASE"/>
    <property type="match status" value="1"/>
</dbReference>
<dbReference type="Pfam" id="PF13382">
    <property type="entry name" value="Adenine_deam_C"/>
    <property type="match status" value="1"/>
</dbReference>
<dbReference type="Pfam" id="PF01979">
    <property type="entry name" value="Amidohydro_1"/>
    <property type="match status" value="1"/>
</dbReference>
<dbReference type="SUPFAM" id="SSF51338">
    <property type="entry name" value="Composite domain of metallo-dependent hydrolases"/>
    <property type="match status" value="1"/>
</dbReference>
<dbReference type="SUPFAM" id="SSF51556">
    <property type="entry name" value="Metallo-dependent hydrolases"/>
    <property type="match status" value="1"/>
</dbReference>
<comment type="catalytic activity">
    <reaction evidence="1">
        <text>adenine + H2O + H(+) = hypoxanthine + NH4(+)</text>
        <dbReference type="Rhea" id="RHEA:23688"/>
        <dbReference type="ChEBI" id="CHEBI:15377"/>
        <dbReference type="ChEBI" id="CHEBI:15378"/>
        <dbReference type="ChEBI" id="CHEBI:16708"/>
        <dbReference type="ChEBI" id="CHEBI:17368"/>
        <dbReference type="ChEBI" id="CHEBI:28938"/>
        <dbReference type="EC" id="3.5.4.2"/>
    </reaction>
</comment>
<comment type="cofactor">
    <cofactor evidence="1">
        <name>Mn(2+)</name>
        <dbReference type="ChEBI" id="CHEBI:29035"/>
    </cofactor>
</comment>
<comment type="similarity">
    <text evidence="1">Belongs to the metallo-dependent hydrolases superfamily. Adenine deaminase family.</text>
</comment>
<protein>
    <recommendedName>
        <fullName evidence="1">Adenine deaminase</fullName>
        <shortName evidence="1">Adenase</shortName>
        <shortName evidence="1">Adenine aminase</shortName>
        <ecNumber evidence="1">3.5.4.2</ecNumber>
    </recommendedName>
</protein>
<sequence length="586" mass="63714">MSLSNKKTQKIASDLLPARLSQARGDGTLDLLITNVQMLDVITGDIYPTCIAIGGEHIVGVGMEYQTQSARRTWNALGAFVTPGFIDGHLHIESSMMSPFEFEKATLPLGTTTAICDPHEITNVLGGRGFSWFLRSSELMHQNLFVQMSSCVPALPGFETTGSDFPLEEMKSFKDHPSVLGLAEMMNFPGVIHADEEVLAKIEAFDDLNMDGHAPLLRGKALNAYLLAGIQNCHETVTLEEGREKLQKGMGLIIREGSVAKNLRTLAPLVNEFSSPQCLLCTDDRNPFEIAHEGHINYLIKELINKHGVAVHVAYRLATYSAARHFGLKRLGLVAPGKKADLVFLKDLKAVDIQEVMIGGKFVSELKLQDSLQEKLQTSQPPLENTMKRSPLTEKELTVNLLPGVYNVIEIVPHEIITQHLTVAFDGQKFAESDVLYMANIERYGKGLPPALGLVKGMGLKSGALASSVAHDSHNIMVIGTNPADMVLAVNTLIKSGGGFAVADQGEIKALVELPIAGLLSLKSAEEIKDGIADLKTAFRSLGVHLDEPFIQMAFLALPVIPTLKLTDRGLVNVTNFSFIPLQVEA</sequence>
<organism>
    <name type="scientific">Bdellovibrio bacteriovorus (strain ATCC 15356 / DSM 50701 / NCIMB 9529 / HD100)</name>
    <dbReference type="NCBI Taxonomy" id="264462"/>
    <lineage>
        <taxon>Bacteria</taxon>
        <taxon>Pseudomonadati</taxon>
        <taxon>Bdellovibrionota</taxon>
        <taxon>Bdellovibrionia</taxon>
        <taxon>Bdellovibrionales</taxon>
        <taxon>Pseudobdellovibrionaceae</taxon>
        <taxon>Bdellovibrio</taxon>
    </lineage>
</organism>
<gene>
    <name evidence="1" type="primary">ade</name>
    <name type="ordered locus">Bd2636</name>
</gene>
<proteinExistence type="inferred from homology"/>